<accession>Q2NEW4</accession>
<dbReference type="EC" id="6.1.1.7" evidence="1"/>
<dbReference type="EMBL" id="CP000102">
    <property type="protein sequence ID" value="ABC57639.1"/>
    <property type="molecule type" value="Genomic_DNA"/>
</dbReference>
<dbReference type="RefSeq" id="WP_011406838.1">
    <property type="nucleotide sequence ID" value="NC_007681.1"/>
</dbReference>
<dbReference type="SMR" id="Q2NEW4"/>
<dbReference type="STRING" id="339860.Msp_1262"/>
<dbReference type="GeneID" id="41325832"/>
<dbReference type="KEGG" id="mst:Msp_1262"/>
<dbReference type="eggNOG" id="arCOG01255">
    <property type="taxonomic scope" value="Archaea"/>
</dbReference>
<dbReference type="HOGENOM" id="CLU_004485_4_0_2"/>
<dbReference type="OrthoDB" id="7506at2157"/>
<dbReference type="Proteomes" id="UP000001931">
    <property type="component" value="Chromosome"/>
</dbReference>
<dbReference type="GO" id="GO:0005737">
    <property type="term" value="C:cytoplasm"/>
    <property type="evidence" value="ECO:0007669"/>
    <property type="project" value="UniProtKB-SubCell"/>
</dbReference>
<dbReference type="GO" id="GO:0004813">
    <property type="term" value="F:alanine-tRNA ligase activity"/>
    <property type="evidence" value="ECO:0007669"/>
    <property type="project" value="UniProtKB-UniRule"/>
</dbReference>
<dbReference type="GO" id="GO:0002161">
    <property type="term" value="F:aminoacyl-tRNA deacylase activity"/>
    <property type="evidence" value="ECO:0007669"/>
    <property type="project" value="UniProtKB-ARBA"/>
</dbReference>
<dbReference type="GO" id="GO:0005524">
    <property type="term" value="F:ATP binding"/>
    <property type="evidence" value="ECO:0007669"/>
    <property type="project" value="UniProtKB-UniRule"/>
</dbReference>
<dbReference type="GO" id="GO:0000049">
    <property type="term" value="F:tRNA binding"/>
    <property type="evidence" value="ECO:0007669"/>
    <property type="project" value="UniProtKB-KW"/>
</dbReference>
<dbReference type="GO" id="GO:0008270">
    <property type="term" value="F:zinc ion binding"/>
    <property type="evidence" value="ECO:0007669"/>
    <property type="project" value="UniProtKB-UniRule"/>
</dbReference>
<dbReference type="GO" id="GO:0006419">
    <property type="term" value="P:alanyl-tRNA aminoacylation"/>
    <property type="evidence" value="ECO:0007669"/>
    <property type="project" value="UniProtKB-UniRule"/>
</dbReference>
<dbReference type="FunFam" id="3.10.310.40:FF:000001">
    <property type="entry name" value="Alanine--tRNA ligase"/>
    <property type="match status" value="1"/>
</dbReference>
<dbReference type="FunFam" id="3.30.54.20:FF:000005">
    <property type="entry name" value="Alanine--tRNA ligase"/>
    <property type="match status" value="1"/>
</dbReference>
<dbReference type="FunFam" id="3.30.980.10:FF:000004">
    <property type="entry name" value="Alanine--tRNA ligase, cytoplasmic"/>
    <property type="match status" value="1"/>
</dbReference>
<dbReference type="Gene3D" id="2.40.30.130">
    <property type="match status" value="1"/>
</dbReference>
<dbReference type="Gene3D" id="3.10.310.40">
    <property type="match status" value="1"/>
</dbReference>
<dbReference type="Gene3D" id="3.30.54.20">
    <property type="match status" value="1"/>
</dbReference>
<dbReference type="Gene3D" id="6.10.250.550">
    <property type="match status" value="1"/>
</dbReference>
<dbReference type="Gene3D" id="3.30.930.10">
    <property type="entry name" value="Bira Bifunctional Protein, Domain 2"/>
    <property type="match status" value="1"/>
</dbReference>
<dbReference type="Gene3D" id="3.30.980.10">
    <property type="entry name" value="Threonyl-trna Synthetase, Chain A, domain 2"/>
    <property type="match status" value="1"/>
</dbReference>
<dbReference type="HAMAP" id="MF_00036_A">
    <property type="entry name" value="Ala_tRNA_synth_A"/>
    <property type="match status" value="1"/>
</dbReference>
<dbReference type="InterPro" id="IPR045864">
    <property type="entry name" value="aa-tRNA-synth_II/BPL/LPL"/>
</dbReference>
<dbReference type="InterPro" id="IPR002318">
    <property type="entry name" value="Ala-tRNA-lgiase_IIc"/>
</dbReference>
<dbReference type="InterPro" id="IPR018162">
    <property type="entry name" value="Ala-tRNA-ligase_IIc_anticod-bd"/>
</dbReference>
<dbReference type="InterPro" id="IPR018165">
    <property type="entry name" value="Ala-tRNA-synth_IIc_core"/>
</dbReference>
<dbReference type="InterPro" id="IPR018164">
    <property type="entry name" value="Ala-tRNA-synth_IIc_N"/>
</dbReference>
<dbReference type="InterPro" id="IPR022429">
    <property type="entry name" value="Ala-tRNA_lgiase_arc"/>
</dbReference>
<dbReference type="InterPro" id="IPR050058">
    <property type="entry name" value="Ala-tRNA_ligase"/>
</dbReference>
<dbReference type="InterPro" id="IPR003156">
    <property type="entry name" value="DHHA1_dom"/>
</dbReference>
<dbReference type="InterPro" id="IPR018163">
    <property type="entry name" value="Thr/Ala-tRNA-synth_IIc_edit"/>
</dbReference>
<dbReference type="InterPro" id="IPR009000">
    <property type="entry name" value="Transl_B-barrel_sf"/>
</dbReference>
<dbReference type="InterPro" id="IPR012947">
    <property type="entry name" value="tRNA_SAD"/>
</dbReference>
<dbReference type="NCBIfam" id="TIGR03683">
    <property type="entry name" value="A-tRNA_syn_arch"/>
    <property type="match status" value="1"/>
</dbReference>
<dbReference type="NCBIfam" id="TIGR00344">
    <property type="entry name" value="alaS"/>
    <property type="match status" value="1"/>
</dbReference>
<dbReference type="PANTHER" id="PTHR11777:SF9">
    <property type="entry name" value="ALANINE--TRNA LIGASE, CYTOPLASMIC"/>
    <property type="match status" value="1"/>
</dbReference>
<dbReference type="PANTHER" id="PTHR11777">
    <property type="entry name" value="ALANYL-TRNA SYNTHETASE"/>
    <property type="match status" value="1"/>
</dbReference>
<dbReference type="Pfam" id="PF02272">
    <property type="entry name" value="DHHA1"/>
    <property type="match status" value="1"/>
</dbReference>
<dbReference type="Pfam" id="PF01411">
    <property type="entry name" value="tRNA-synt_2c"/>
    <property type="match status" value="1"/>
</dbReference>
<dbReference type="Pfam" id="PF07973">
    <property type="entry name" value="tRNA_SAD"/>
    <property type="match status" value="1"/>
</dbReference>
<dbReference type="PRINTS" id="PR00980">
    <property type="entry name" value="TRNASYNTHALA"/>
</dbReference>
<dbReference type="SMART" id="SM00863">
    <property type="entry name" value="tRNA_SAD"/>
    <property type="match status" value="1"/>
</dbReference>
<dbReference type="SUPFAM" id="SSF55681">
    <property type="entry name" value="Class II aaRS and biotin synthetases"/>
    <property type="match status" value="1"/>
</dbReference>
<dbReference type="SUPFAM" id="SSF101353">
    <property type="entry name" value="Putative anticodon-binding domain of alanyl-tRNA synthetase (AlaRS)"/>
    <property type="match status" value="1"/>
</dbReference>
<dbReference type="SUPFAM" id="SSF55186">
    <property type="entry name" value="ThrRS/AlaRS common domain"/>
    <property type="match status" value="1"/>
</dbReference>
<dbReference type="SUPFAM" id="SSF50447">
    <property type="entry name" value="Translation proteins"/>
    <property type="match status" value="1"/>
</dbReference>
<dbReference type="PROSITE" id="PS50860">
    <property type="entry name" value="AA_TRNA_LIGASE_II_ALA"/>
    <property type="match status" value="1"/>
</dbReference>
<protein>
    <recommendedName>
        <fullName evidence="1">Alanine--tRNA ligase</fullName>
        <ecNumber evidence="1">6.1.1.7</ecNumber>
    </recommendedName>
    <alternativeName>
        <fullName evidence="1">Alanyl-tRNA synthetase</fullName>
        <shortName evidence="1">AlaRS</shortName>
    </alternativeName>
</protein>
<sequence length="903" mass="102117">MTYELEQLGYKKQVCQKCGNTFWSIRERATCGDAPCDEYEFIGNPVTDKQYDLMGIQKKFKGFFKDHGHTPINRYPVLAKRWRNDVFLVGASIYDFQPWVTSGMVRPPANPLVVAQPSIRLNDVDNVGRTGRHMTCFTMGAHHAFNTDETPIYWKNETLRYCHEFLVSIGINPEEITYIESWWKGGGNEGPSFEICAHGVELATLVFIQYATTKDGLKEIPLKIVDTGYGLERIAWVSQGTPTAYDATFGSVIDKLTDISGVELNTEILSENARIAGMMDIEDISDLKLLRKKVADKLSLDPDMLKKTTAPMEAIYIVADHTRCLSFMLADGIIPSNVKEGYLARLVLRRTVKYMNELGLNESLSDIMKMQVDYLSKTYPEIKDNKDHIINITDLEEERYHTTLTKGKNLVKRSIKTLKKQNKKSFPTDMLINFYDSHGIPPETVEAISKENAFDANIPDNFYTQIAAAHEEEEEEEIEEMELNFPKTKLSFYDDLKQRTFTAKVLGVVDSNKIILNQTIYYPEGGGQPSDIGTITRVNGEVLNITYAQKVDGIVLHHVAKEDESKLDNIVGEEITGEIDSKRRDLLTRNHTATHLVIASAREVLGKHIWQAGAQKGLDKTRIDLSHYKRISHEEVQEIERLANKRVQENHPVNIQWYDRTDAEVKYGFKLYQGGIVPGKNIRVVEIPGIDVQACAGTHCEKTGDIGVIKLLRTERVQDGVERLEYAVSDSGIKKIQDDDDIIRNSSDVFGVDAEQLPRTCKRFFNEWKEQQKRIKSLEKQLAQVKIFSLENEIANINGYNVITEVLDVDNNQLREIAINLVEKEEVADIAILINNNGNIVASSNNKILEKGMKMGDVVNDIGKFLGGRGGGKPTLAQGAKMTDLSRKDEAFESVKEQIRSWN</sequence>
<organism>
    <name type="scientific">Methanosphaera stadtmanae (strain ATCC 43021 / DSM 3091 / JCM 11832 / MCB-3)</name>
    <dbReference type="NCBI Taxonomy" id="339860"/>
    <lineage>
        <taxon>Archaea</taxon>
        <taxon>Methanobacteriati</taxon>
        <taxon>Methanobacteriota</taxon>
        <taxon>Methanomada group</taxon>
        <taxon>Methanobacteria</taxon>
        <taxon>Methanobacteriales</taxon>
        <taxon>Methanobacteriaceae</taxon>
        <taxon>Methanosphaera</taxon>
    </lineage>
</organism>
<reference key="1">
    <citation type="journal article" date="2006" name="J. Bacteriol.">
        <title>The genome sequence of Methanosphaera stadtmanae reveals why this human intestinal archaeon is restricted to methanol and H2 for methane formation and ATP synthesis.</title>
        <authorList>
            <person name="Fricke W.F."/>
            <person name="Seedorf H."/>
            <person name="Henne A."/>
            <person name="Kruer M."/>
            <person name="Liesegang H."/>
            <person name="Hedderich R."/>
            <person name="Gottschalk G."/>
            <person name="Thauer R.K."/>
        </authorList>
    </citation>
    <scope>NUCLEOTIDE SEQUENCE [LARGE SCALE GENOMIC DNA]</scope>
    <source>
        <strain>ATCC 43021 / DSM 3091 / JCM 11832 / MCB-3</strain>
    </source>
</reference>
<keyword id="KW-0030">Aminoacyl-tRNA synthetase</keyword>
<keyword id="KW-0067">ATP-binding</keyword>
<keyword id="KW-0963">Cytoplasm</keyword>
<keyword id="KW-0436">Ligase</keyword>
<keyword id="KW-0479">Metal-binding</keyword>
<keyword id="KW-0547">Nucleotide-binding</keyword>
<keyword id="KW-0648">Protein biosynthesis</keyword>
<keyword id="KW-1185">Reference proteome</keyword>
<keyword id="KW-0694">RNA-binding</keyword>
<keyword id="KW-0820">tRNA-binding</keyword>
<keyword id="KW-0862">Zinc</keyword>
<proteinExistence type="inferred from homology"/>
<gene>
    <name evidence="1" type="primary">alaS</name>
    <name type="ordered locus">Msp_1262</name>
</gene>
<feature type="chain" id="PRO_0000347888" description="Alanine--tRNA ligase">
    <location>
        <begin position="1"/>
        <end position="903"/>
    </location>
</feature>
<feature type="binding site" evidence="1">
    <location>
        <position position="591"/>
    </location>
    <ligand>
        <name>Zn(2+)</name>
        <dbReference type="ChEBI" id="CHEBI:29105"/>
    </ligand>
</feature>
<feature type="binding site" evidence="1">
    <location>
        <position position="595"/>
    </location>
    <ligand>
        <name>Zn(2+)</name>
        <dbReference type="ChEBI" id="CHEBI:29105"/>
    </ligand>
</feature>
<feature type="binding site" evidence="1">
    <location>
        <position position="695"/>
    </location>
    <ligand>
        <name>Zn(2+)</name>
        <dbReference type="ChEBI" id="CHEBI:29105"/>
    </ligand>
</feature>
<feature type="binding site" evidence="1">
    <location>
        <position position="699"/>
    </location>
    <ligand>
        <name>Zn(2+)</name>
        <dbReference type="ChEBI" id="CHEBI:29105"/>
    </ligand>
</feature>
<name>SYA_METST</name>
<evidence type="ECO:0000255" key="1">
    <source>
        <dbReference type="HAMAP-Rule" id="MF_00036"/>
    </source>
</evidence>
<comment type="function">
    <text evidence="1">Catalyzes the attachment of alanine to tRNA(Ala) in a two-step reaction: alanine is first activated by ATP to form Ala-AMP and then transferred to the acceptor end of tRNA(Ala). Also edits incorrectly charged Ser-tRNA(Ala) and Gly-tRNA(Ala) via its editing domain.</text>
</comment>
<comment type="catalytic activity">
    <reaction evidence="1">
        <text>tRNA(Ala) + L-alanine + ATP = L-alanyl-tRNA(Ala) + AMP + diphosphate</text>
        <dbReference type="Rhea" id="RHEA:12540"/>
        <dbReference type="Rhea" id="RHEA-COMP:9657"/>
        <dbReference type="Rhea" id="RHEA-COMP:9923"/>
        <dbReference type="ChEBI" id="CHEBI:30616"/>
        <dbReference type="ChEBI" id="CHEBI:33019"/>
        <dbReference type="ChEBI" id="CHEBI:57972"/>
        <dbReference type="ChEBI" id="CHEBI:78442"/>
        <dbReference type="ChEBI" id="CHEBI:78497"/>
        <dbReference type="ChEBI" id="CHEBI:456215"/>
        <dbReference type="EC" id="6.1.1.7"/>
    </reaction>
</comment>
<comment type="cofactor">
    <cofactor evidence="1">
        <name>Zn(2+)</name>
        <dbReference type="ChEBI" id="CHEBI:29105"/>
    </cofactor>
    <text evidence="1">Binds 1 zinc ion per subunit.</text>
</comment>
<comment type="subcellular location">
    <subcellularLocation>
        <location evidence="1">Cytoplasm</location>
    </subcellularLocation>
</comment>
<comment type="domain">
    <text evidence="1">Consists of three domains; the N-terminal catalytic domain, the editing domain and the C-terminal C-Ala domain. The editing domain removes incorrectly charged amino acids, while the C-Ala domain, along with tRNA(Ala), serves as a bridge to cooperatively bring together the editing and aminoacylation centers thus stimulating deacylation of misacylated tRNAs.</text>
</comment>
<comment type="similarity">
    <text evidence="1">Belongs to the class-II aminoacyl-tRNA synthetase family.</text>
</comment>